<dbReference type="EMBL" id="CP000961">
    <property type="protein sequence ID" value="ACA85736.1"/>
    <property type="molecule type" value="Genomic_DNA"/>
</dbReference>
<dbReference type="RefSeq" id="WP_012324082.1">
    <property type="nucleotide sequence ID" value="NC_010506.1"/>
</dbReference>
<dbReference type="KEGG" id="swd:Swoo_1444"/>
<dbReference type="eggNOG" id="COG1671">
    <property type="taxonomic scope" value="Bacteria"/>
</dbReference>
<dbReference type="HOGENOM" id="CLU_106619_2_1_6"/>
<dbReference type="Proteomes" id="UP000002168">
    <property type="component" value="Chromosome"/>
</dbReference>
<dbReference type="CDD" id="cd18720">
    <property type="entry name" value="PIN_YqxD-like"/>
    <property type="match status" value="1"/>
</dbReference>
<dbReference type="HAMAP" id="MF_00489">
    <property type="entry name" value="UPF0178"/>
    <property type="match status" value="1"/>
</dbReference>
<dbReference type="InterPro" id="IPR003791">
    <property type="entry name" value="UPF0178"/>
</dbReference>
<dbReference type="NCBIfam" id="NF001095">
    <property type="entry name" value="PRK00124.1"/>
    <property type="match status" value="1"/>
</dbReference>
<dbReference type="PANTHER" id="PTHR35146">
    <property type="entry name" value="UPF0178 PROTEIN YAII"/>
    <property type="match status" value="1"/>
</dbReference>
<dbReference type="PANTHER" id="PTHR35146:SF1">
    <property type="entry name" value="UPF0178 PROTEIN YAII"/>
    <property type="match status" value="1"/>
</dbReference>
<dbReference type="Pfam" id="PF02639">
    <property type="entry name" value="DUF188"/>
    <property type="match status" value="1"/>
</dbReference>
<name>Y1444_SHEWM</name>
<proteinExistence type="inferred from homology"/>
<evidence type="ECO:0000255" key="1">
    <source>
        <dbReference type="HAMAP-Rule" id="MF_00489"/>
    </source>
</evidence>
<accession>B1KJR3</accession>
<organism>
    <name type="scientific">Shewanella woodyi (strain ATCC 51908 / MS32)</name>
    <dbReference type="NCBI Taxonomy" id="392500"/>
    <lineage>
        <taxon>Bacteria</taxon>
        <taxon>Pseudomonadati</taxon>
        <taxon>Pseudomonadota</taxon>
        <taxon>Gammaproteobacteria</taxon>
        <taxon>Alteromonadales</taxon>
        <taxon>Shewanellaceae</taxon>
        <taxon>Shewanella</taxon>
    </lineage>
</organism>
<comment type="similarity">
    <text evidence="1">Belongs to the UPF0178 family.</text>
</comment>
<reference key="1">
    <citation type="submission" date="2008-02" db="EMBL/GenBank/DDBJ databases">
        <title>Complete sequence of Shewanella woodyi ATCC 51908.</title>
        <authorList>
            <consortium name="US DOE Joint Genome Institute"/>
            <person name="Copeland A."/>
            <person name="Lucas S."/>
            <person name="Lapidus A."/>
            <person name="Glavina del Rio T."/>
            <person name="Dalin E."/>
            <person name="Tice H."/>
            <person name="Bruce D."/>
            <person name="Goodwin L."/>
            <person name="Pitluck S."/>
            <person name="Sims D."/>
            <person name="Brettin T."/>
            <person name="Detter J.C."/>
            <person name="Han C."/>
            <person name="Kuske C.R."/>
            <person name="Schmutz J."/>
            <person name="Larimer F."/>
            <person name="Land M."/>
            <person name="Hauser L."/>
            <person name="Kyrpides N."/>
            <person name="Lykidis A."/>
            <person name="Zhao J.-S."/>
            <person name="Richardson P."/>
        </authorList>
    </citation>
    <scope>NUCLEOTIDE SEQUENCE [LARGE SCALE GENOMIC DNA]</scope>
    <source>
        <strain>ATCC 51908 / MS32</strain>
    </source>
</reference>
<sequence>MKIWVDADACPGVIKEILFRVADRAKVEVTLVANHSMRIPPSRYINMVTVPSGFDVADDEIVKRLDAGDLVITADIPLASEVIDKGGVALNPRGELYTEQNIKSILNMRDFMDTMRASGVQTGGPAAIGASEKQAFGNQLDRFVTKHHKPV</sequence>
<protein>
    <recommendedName>
        <fullName evidence="1">UPF0178 protein Swoo_1444</fullName>
    </recommendedName>
</protein>
<feature type="chain" id="PRO_1000126215" description="UPF0178 protein Swoo_1444">
    <location>
        <begin position="1"/>
        <end position="151"/>
    </location>
</feature>
<keyword id="KW-1185">Reference proteome</keyword>
<gene>
    <name type="ordered locus">Swoo_1444</name>
</gene>